<comment type="subcellular location">
    <subcellularLocation>
        <location evidence="4">Membrane</location>
        <topology evidence="4">Single-pass membrane protein</topology>
    </subcellularLocation>
</comment>
<comment type="similarity">
    <text evidence="4">Belongs to the formin-like family. Class-I subfamily.</text>
</comment>
<accession>Q69MT2</accession>
<accession>B7ESA3</accession>
<proteinExistence type="evidence at transcript level"/>
<protein>
    <recommendedName>
        <fullName>Formin-like protein 15</fullName>
    </recommendedName>
    <alternativeName>
        <fullName>OsFH15</fullName>
    </alternativeName>
</protein>
<reference key="1">
    <citation type="journal article" date="2005" name="Nature">
        <title>The map-based sequence of the rice genome.</title>
        <authorList>
            <consortium name="International rice genome sequencing project (IRGSP)"/>
        </authorList>
    </citation>
    <scope>NUCLEOTIDE SEQUENCE [LARGE SCALE GENOMIC DNA]</scope>
    <source>
        <strain>cv. Nipponbare</strain>
    </source>
</reference>
<reference key="2">
    <citation type="journal article" date="2008" name="Nucleic Acids Res.">
        <title>The rice annotation project database (RAP-DB): 2008 update.</title>
        <authorList>
            <consortium name="The rice annotation project (RAP)"/>
        </authorList>
    </citation>
    <scope>GENOME REANNOTATION</scope>
    <source>
        <strain>cv. Nipponbare</strain>
    </source>
</reference>
<reference key="3">
    <citation type="journal article" date="2013" name="Rice">
        <title>Improvement of the Oryza sativa Nipponbare reference genome using next generation sequence and optical map data.</title>
        <authorList>
            <person name="Kawahara Y."/>
            <person name="de la Bastide M."/>
            <person name="Hamilton J.P."/>
            <person name="Kanamori H."/>
            <person name="McCombie W.R."/>
            <person name="Ouyang S."/>
            <person name="Schwartz D.C."/>
            <person name="Tanaka T."/>
            <person name="Wu J."/>
            <person name="Zhou S."/>
            <person name="Childs K.L."/>
            <person name="Davidson R.M."/>
            <person name="Lin H."/>
            <person name="Quesada-Ocampo L."/>
            <person name="Vaillancourt B."/>
            <person name="Sakai H."/>
            <person name="Lee S.S."/>
            <person name="Kim J."/>
            <person name="Numa H."/>
            <person name="Itoh T."/>
            <person name="Buell C.R."/>
            <person name="Matsumoto T."/>
        </authorList>
    </citation>
    <scope>GENOME REANNOTATION</scope>
    <source>
        <strain>cv. Nipponbare</strain>
    </source>
</reference>
<reference key="4">
    <citation type="journal article" date="2003" name="Science">
        <title>Collection, mapping, and annotation of over 28,000 cDNA clones from japonica rice.</title>
        <authorList>
            <consortium name="The rice full-length cDNA consortium"/>
        </authorList>
    </citation>
    <scope>NUCLEOTIDE SEQUENCE [LARGE SCALE MRNA]</scope>
    <source>
        <strain>cv. Nipponbare</strain>
    </source>
</reference>
<reference key="5">
    <citation type="journal article" date="2004" name="BMC Genomics">
        <title>Formin homology 2 domains occur in multiple contexts in angiosperms.</title>
        <authorList>
            <person name="Cvrckova F."/>
            <person name="Novotny M."/>
            <person name="Pickova D."/>
            <person name="Zarsky V."/>
        </authorList>
    </citation>
    <scope>GENE FAMILY</scope>
    <scope>NOMENCLATURE</scope>
</reference>
<organism>
    <name type="scientific">Oryza sativa subsp. japonica</name>
    <name type="common">Rice</name>
    <dbReference type="NCBI Taxonomy" id="39947"/>
    <lineage>
        <taxon>Eukaryota</taxon>
        <taxon>Viridiplantae</taxon>
        <taxon>Streptophyta</taxon>
        <taxon>Embryophyta</taxon>
        <taxon>Tracheophyta</taxon>
        <taxon>Spermatophyta</taxon>
        <taxon>Magnoliopsida</taxon>
        <taxon>Liliopsida</taxon>
        <taxon>Poales</taxon>
        <taxon>Poaceae</taxon>
        <taxon>BOP clade</taxon>
        <taxon>Oryzoideae</taxon>
        <taxon>Oryzeae</taxon>
        <taxon>Oryzinae</taxon>
        <taxon>Oryza</taxon>
        <taxon>Oryza sativa</taxon>
    </lineage>
</organism>
<feature type="signal peptide" evidence="1">
    <location>
        <begin position="1"/>
        <end position="18"/>
    </location>
</feature>
<feature type="chain" id="PRO_0000319005" description="Formin-like protein 15">
    <location>
        <begin position="19"/>
        <end position="788"/>
    </location>
</feature>
<feature type="transmembrane region" description="Helical" evidence="1">
    <location>
        <begin position="148"/>
        <end position="168"/>
    </location>
</feature>
<feature type="domain" description="FH2" evidence="2">
    <location>
        <begin position="340"/>
        <end position="768"/>
    </location>
</feature>
<feature type="region of interest" description="Disordered" evidence="3">
    <location>
        <begin position="48"/>
        <end position="118"/>
    </location>
</feature>
<feature type="region of interest" description="Disordered" evidence="3">
    <location>
        <begin position="193"/>
        <end position="307"/>
    </location>
</feature>
<feature type="region of interest" description="Disordered" evidence="3">
    <location>
        <begin position="322"/>
        <end position="347"/>
    </location>
</feature>
<feature type="compositionally biased region" description="Pro residues" evidence="3">
    <location>
        <begin position="53"/>
        <end position="83"/>
    </location>
</feature>
<feature type="compositionally biased region" description="Low complexity" evidence="3">
    <location>
        <begin position="97"/>
        <end position="118"/>
    </location>
</feature>
<feature type="compositionally biased region" description="Low complexity" evidence="3">
    <location>
        <begin position="209"/>
        <end position="219"/>
    </location>
</feature>
<feature type="compositionally biased region" description="Polar residues" evidence="3">
    <location>
        <begin position="231"/>
        <end position="246"/>
    </location>
</feature>
<feature type="compositionally biased region" description="Pro residues" evidence="3">
    <location>
        <begin position="257"/>
        <end position="279"/>
    </location>
</feature>
<feature type="compositionally biased region" description="Basic and acidic residues" evidence="3">
    <location>
        <begin position="327"/>
        <end position="342"/>
    </location>
</feature>
<gene>
    <name type="primary">FH15</name>
    <name type="ordered locus">Os09g0517600</name>
    <name type="ordered locus">LOC_Os09g34180</name>
    <name type="ORF">OSJNBb0034B12.29</name>
</gene>
<evidence type="ECO:0000255" key="1"/>
<evidence type="ECO:0000255" key="2">
    <source>
        <dbReference type="PROSITE-ProRule" id="PRU00774"/>
    </source>
</evidence>
<evidence type="ECO:0000256" key="3">
    <source>
        <dbReference type="SAM" id="MobiDB-lite"/>
    </source>
</evidence>
<evidence type="ECO:0000305" key="4"/>
<dbReference type="EMBL" id="AP005735">
    <property type="protein sequence ID" value="BAD33833.1"/>
    <property type="molecule type" value="Genomic_DNA"/>
</dbReference>
<dbReference type="EMBL" id="AP008215">
    <property type="protein sequence ID" value="BAF25594.1"/>
    <property type="molecule type" value="Genomic_DNA"/>
</dbReference>
<dbReference type="EMBL" id="AP014965">
    <property type="protein sequence ID" value="BAT08977.1"/>
    <property type="molecule type" value="Genomic_DNA"/>
</dbReference>
<dbReference type="EMBL" id="AK101828">
    <property type="protein sequence ID" value="BAG95250.1"/>
    <property type="molecule type" value="mRNA"/>
</dbReference>
<dbReference type="RefSeq" id="XP_015612411.1">
    <property type="nucleotide sequence ID" value="XM_015756925.1"/>
</dbReference>
<dbReference type="SMR" id="Q69MT2"/>
<dbReference type="FunCoup" id="Q69MT2">
    <property type="interactions" value="1"/>
</dbReference>
<dbReference type="STRING" id="39947.Q69MT2"/>
<dbReference type="PaxDb" id="39947-Q69MT2"/>
<dbReference type="EnsemblPlants" id="Os09t0517600-01">
    <property type="protein sequence ID" value="Os09t0517600-01"/>
    <property type="gene ID" value="Os09g0517600"/>
</dbReference>
<dbReference type="Gramene" id="Os09t0517600-01">
    <property type="protein sequence ID" value="Os09t0517600-01"/>
    <property type="gene ID" value="Os09g0517600"/>
</dbReference>
<dbReference type="KEGG" id="dosa:Os09g0517600"/>
<dbReference type="eggNOG" id="KOG1922">
    <property type="taxonomic scope" value="Eukaryota"/>
</dbReference>
<dbReference type="HOGENOM" id="CLU_007699_0_2_1"/>
<dbReference type="InParanoid" id="Q69MT2"/>
<dbReference type="OMA" id="ACCNQEN"/>
<dbReference type="OrthoDB" id="1668162at2759"/>
<dbReference type="Proteomes" id="UP000000763">
    <property type="component" value="Chromosome 9"/>
</dbReference>
<dbReference type="Proteomes" id="UP000059680">
    <property type="component" value="Chromosome 9"/>
</dbReference>
<dbReference type="GO" id="GO:0005856">
    <property type="term" value="C:cytoskeleton"/>
    <property type="evidence" value="ECO:0000318"/>
    <property type="project" value="GO_Central"/>
</dbReference>
<dbReference type="GO" id="GO:0016020">
    <property type="term" value="C:membrane"/>
    <property type="evidence" value="ECO:0007669"/>
    <property type="project" value="UniProtKB-SubCell"/>
</dbReference>
<dbReference type="GO" id="GO:0051015">
    <property type="term" value="F:actin filament binding"/>
    <property type="evidence" value="ECO:0000318"/>
    <property type="project" value="GO_Central"/>
</dbReference>
<dbReference type="GO" id="GO:0030036">
    <property type="term" value="P:actin cytoskeleton organization"/>
    <property type="evidence" value="ECO:0000318"/>
    <property type="project" value="GO_Central"/>
</dbReference>
<dbReference type="GO" id="GO:0045010">
    <property type="term" value="P:actin nucleation"/>
    <property type="evidence" value="ECO:0007669"/>
    <property type="project" value="InterPro"/>
</dbReference>
<dbReference type="Gene3D" id="1.20.58.2220">
    <property type="entry name" value="Formin, FH2 domain"/>
    <property type="match status" value="1"/>
</dbReference>
<dbReference type="InterPro" id="IPR015425">
    <property type="entry name" value="FH2_Formin"/>
</dbReference>
<dbReference type="InterPro" id="IPR042201">
    <property type="entry name" value="FH2_Formin_sf"/>
</dbReference>
<dbReference type="InterPro" id="IPR027643">
    <property type="entry name" value="Formin-like_plant"/>
</dbReference>
<dbReference type="PANTHER" id="PTHR23213:SF336">
    <property type="entry name" value="FORMIN-LIKE PROTEIN 15"/>
    <property type="match status" value="1"/>
</dbReference>
<dbReference type="PANTHER" id="PTHR23213">
    <property type="entry name" value="FORMIN-RELATED"/>
    <property type="match status" value="1"/>
</dbReference>
<dbReference type="Pfam" id="PF02181">
    <property type="entry name" value="FH2"/>
    <property type="match status" value="1"/>
</dbReference>
<dbReference type="SMART" id="SM00498">
    <property type="entry name" value="FH2"/>
    <property type="match status" value="1"/>
</dbReference>
<dbReference type="SUPFAM" id="SSF101447">
    <property type="entry name" value="Formin homology 2 domain (FH2 domain)"/>
    <property type="match status" value="1"/>
</dbReference>
<dbReference type="PROSITE" id="PS51444">
    <property type="entry name" value="FH2"/>
    <property type="match status" value="1"/>
</dbReference>
<name>FH15_ORYSJ</name>
<keyword id="KW-0472">Membrane</keyword>
<keyword id="KW-1185">Reference proteome</keyword>
<keyword id="KW-0732">Signal</keyword>
<keyword id="KW-0812">Transmembrane</keyword>
<keyword id="KW-1133">Transmembrane helix</keyword>
<sequence>MLARWLLVLLLLLPVSWCHQDRHGRRHYPRRWRSSGSRRELHEPLFPLENAPALPPPPPPPPAPFFPFLPDSAPPQLPPPVTTPAPAGGAGDGGTDAGAAATGDASSSSSSSASPHPTAPANISYMAMPIYHSAPLRSFLSSHRLLTVLLPVAAVLAAVLAAALVYLLTRRRRCSKGEPHAAHTKAVLLSPGNSTALYDGDHDQHGRGSTATAASSASSPELRPMPPLPRQFQQTRTSMPSTSQTIHEAGAEDKRAPPPQSVRPPPPPPPPPPPPPMPPRTDNASTQAAPAPPPPLPRAGNGSGWLPRRYTERAAPTVIRASAGAVHPEESPARASPEEKAADAAARPKLKPLHWDKVRPASSGRPTVWDQLKASSFRVNEEMIETLFVSNSTRRASKNGVKEANAACCNQENKVLDPKKSQNIAIMLRALDATKEEVCKALLDGQAESLGTELLETLLKMAPSREEEIKLKEFREDAVSKLGPAESFLKAVLAIPFAFKRVEAMLYIANFDSEVDYLKTSFKTLEAACEELRGSRLFHKILDAVLKTGNRMNTGTNRGNASAFKLDALLKLVDVKGADGKTTLLHFVIEEIVKSEGASILATGQTSNQGSAIADDFQCKKVGLRIVASLGGELGNVKKAAGMDSDTLASCVAKLSAGVSKISEALQLNQQLGSDDHCKRFRASIGEFLQKAEAEITAVQAQESLALSLVRETTEFFHGDSVKEEGHPLRIFMVVRDFLTVLDHVCKDVGRMNERTAIGSSLRLENAPVLARFNAVQPSSSEEESSSS</sequence>